<feature type="chain" id="PRO_1000048636" description="Chromosomal replication initiator protein DnaA">
    <location>
        <begin position="1"/>
        <end position="457"/>
    </location>
</feature>
<feature type="region of interest" description="Domain I, interacts with DnaA modulators" evidence="1">
    <location>
        <begin position="1"/>
        <end position="75"/>
    </location>
</feature>
<feature type="region of interest" description="Domain II" evidence="1">
    <location>
        <begin position="75"/>
        <end position="118"/>
    </location>
</feature>
<feature type="region of interest" description="Domain III, AAA+ region" evidence="1">
    <location>
        <begin position="119"/>
        <end position="335"/>
    </location>
</feature>
<feature type="region of interest" description="Domain IV, binds dsDNA" evidence="1">
    <location>
        <begin position="336"/>
        <end position="457"/>
    </location>
</feature>
<feature type="binding site" evidence="1">
    <location>
        <position position="163"/>
    </location>
    <ligand>
        <name>ATP</name>
        <dbReference type="ChEBI" id="CHEBI:30616"/>
    </ligand>
</feature>
<feature type="binding site" evidence="1">
    <location>
        <position position="165"/>
    </location>
    <ligand>
        <name>ATP</name>
        <dbReference type="ChEBI" id="CHEBI:30616"/>
    </ligand>
</feature>
<feature type="binding site" evidence="1">
    <location>
        <position position="166"/>
    </location>
    <ligand>
        <name>ATP</name>
        <dbReference type="ChEBI" id="CHEBI:30616"/>
    </ligand>
</feature>
<feature type="binding site" evidence="1">
    <location>
        <position position="167"/>
    </location>
    <ligand>
        <name>ATP</name>
        <dbReference type="ChEBI" id="CHEBI:30616"/>
    </ligand>
</feature>
<evidence type="ECO:0000255" key="1">
    <source>
        <dbReference type="HAMAP-Rule" id="MF_00377"/>
    </source>
</evidence>
<gene>
    <name evidence="1" type="primary">dnaA</name>
    <name type="ordered locus">CPF_0001</name>
</gene>
<comment type="function">
    <text evidence="1">Plays an essential role in the initiation and regulation of chromosomal replication. ATP-DnaA binds to the origin of replication (oriC) to initiate formation of the DNA replication initiation complex once per cell cycle. Binds the DnaA box (a 9 base pair repeat at the origin) and separates the double-stranded (ds)DNA. Forms a right-handed helical filament on oriC DNA; dsDNA binds to the exterior of the filament while single-stranded (ss)DNA is stabiized in the filament's interior. The ATP-DnaA-oriC complex binds and stabilizes one strand of the AT-rich DNA unwinding element (DUE), permitting loading of DNA polymerase. After initiation quickly degrades to an ADP-DnaA complex that is not apt for DNA replication. Binds acidic phospholipids.</text>
</comment>
<comment type="subunit">
    <text evidence="1">Oligomerizes as a right-handed, spiral filament on DNA at oriC.</text>
</comment>
<comment type="subcellular location">
    <subcellularLocation>
        <location evidence="1">Cytoplasm</location>
    </subcellularLocation>
</comment>
<comment type="domain">
    <text evidence="1">Domain I is involved in oligomerization and binding regulators, domain II is flexibile and of varying length in different bacteria, domain III forms the AAA+ region, while domain IV binds dsDNA.</text>
</comment>
<comment type="similarity">
    <text evidence="1">Belongs to the DnaA family.</text>
</comment>
<reference key="1">
    <citation type="journal article" date="2006" name="Genome Res.">
        <title>Skewed genomic variability in strains of the toxigenic bacterial pathogen, Clostridium perfringens.</title>
        <authorList>
            <person name="Myers G.S.A."/>
            <person name="Rasko D.A."/>
            <person name="Cheung J.K."/>
            <person name="Ravel J."/>
            <person name="Seshadri R."/>
            <person name="DeBoy R.T."/>
            <person name="Ren Q."/>
            <person name="Varga J."/>
            <person name="Awad M.M."/>
            <person name="Brinkac L.M."/>
            <person name="Daugherty S.C."/>
            <person name="Haft D.H."/>
            <person name="Dodson R.J."/>
            <person name="Madupu R."/>
            <person name="Nelson W.C."/>
            <person name="Rosovitz M.J."/>
            <person name="Sullivan S.A."/>
            <person name="Khouri H."/>
            <person name="Dimitrov G.I."/>
            <person name="Watkins K.L."/>
            <person name="Mulligan S."/>
            <person name="Benton J."/>
            <person name="Radune D."/>
            <person name="Fisher D.J."/>
            <person name="Atkins H.S."/>
            <person name="Hiscox T."/>
            <person name="Jost B.H."/>
            <person name="Billington S.J."/>
            <person name="Songer J.G."/>
            <person name="McClane B.A."/>
            <person name="Titball R.W."/>
            <person name="Rood J.I."/>
            <person name="Melville S.B."/>
            <person name="Paulsen I.T."/>
        </authorList>
    </citation>
    <scope>NUCLEOTIDE SEQUENCE [LARGE SCALE GENOMIC DNA]</scope>
    <source>
        <strain>ATCC 13124 / DSM 756 / JCM 1290 / NCIMB 6125 / NCTC 8237 / S 107 / Type A</strain>
    </source>
</reference>
<proteinExistence type="inferred from homology"/>
<protein>
    <recommendedName>
        <fullName evidence="1">Chromosomal replication initiator protein DnaA</fullName>
    </recommendedName>
</protein>
<keyword id="KW-0067">ATP-binding</keyword>
<keyword id="KW-0963">Cytoplasm</keyword>
<keyword id="KW-0235">DNA replication</keyword>
<keyword id="KW-0238">DNA-binding</keyword>
<keyword id="KW-0446">Lipid-binding</keyword>
<keyword id="KW-0547">Nucleotide-binding</keyword>
<sequence length="457" mass="52246">MDAQLNNLWEQALNIIKGEISEISFNTWIKSCTPISISDNILKLSVPNEFTKGILDTRYKDLLIQALKIVTSRKFKIEFYLESDLEEEKENEEKQKEEKKENTNDVDGSIVVSDEMSATLNPKYTFQSFVIGNSNRFAHAASLAVAESPAKAYNPLFIYGGVGLGKTHLMHAIGHYILQENPKAKVVYVSSEKFTNELINAIKDDKNEEFRNKYRKVDVLLIDDIQFIAGKERTQEEFFHTFNALHEENKQIILSSDRPPKEIPTLEDRLRSRFEWGLIADIQPPDFETRMAILKKKADVEGLNVPNEVMVYIATKIKSNIRELEGALIRIIAYSSLTNRDVSVDLASEALKDIISNKESAPVTVKTIQESVANYYNLRIEDLKSQRRTRNIAYPRQIAMYLSRKLTDMSLPKIGEEFGGRDHTTVIHAYEKISENLKTDEGLQSMINDITKKLTQK</sequence>
<dbReference type="EMBL" id="CP000246">
    <property type="protein sequence ID" value="ABG83425.1"/>
    <property type="molecule type" value="Genomic_DNA"/>
</dbReference>
<dbReference type="RefSeq" id="WP_003451025.1">
    <property type="nucleotide sequence ID" value="NC_008261.1"/>
</dbReference>
<dbReference type="SMR" id="Q0TV64"/>
<dbReference type="STRING" id="195103.CPF_0001"/>
<dbReference type="PaxDb" id="195103-CPF_0001"/>
<dbReference type="GeneID" id="93000724"/>
<dbReference type="KEGG" id="cpf:CPF_0001"/>
<dbReference type="eggNOG" id="COG0593">
    <property type="taxonomic scope" value="Bacteria"/>
</dbReference>
<dbReference type="HOGENOM" id="CLU_026910_3_1_9"/>
<dbReference type="Proteomes" id="UP000001823">
    <property type="component" value="Chromosome"/>
</dbReference>
<dbReference type="GO" id="GO:0005737">
    <property type="term" value="C:cytoplasm"/>
    <property type="evidence" value="ECO:0007669"/>
    <property type="project" value="UniProtKB-SubCell"/>
</dbReference>
<dbReference type="GO" id="GO:0005886">
    <property type="term" value="C:plasma membrane"/>
    <property type="evidence" value="ECO:0007669"/>
    <property type="project" value="TreeGrafter"/>
</dbReference>
<dbReference type="GO" id="GO:0005524">
    <property type="term" value="F:ATP binding"/>
    <property type="evidence" value="ECO:0007669"/>
    <property type="project" value="UniProtKB-UniRule"/>
</dbReference>
<dbReference type="GO" id="GO:0016887">
    <property type="term" value="F:ATP hydrolysis activity"/>
    <property type="evidence" value="ECO:0007669"/>
    <property type="project" value="InterPro"/>
</dbReference>
<dbReference type="GO" id="GO:0003688">
    <property type="term" value="F:DNA replication origin binding"/>
    <property type="evidence" value="ECO:0007669"/>
    <property type="project" value="UniProtKB-UniRule"/>
</dbReference>
<dbReference type="GO" id="GO:0008289">
    <property type="term" value="F:lipid binding"/>
    <property type="evidence" value="ECO:0007669"/>
    <property type="project" value="UniProtKB-KW"/>
</dbReference>
<dbReference type="GO" id="GO:0006270">
    <property type="term" value="P:DNA replication initiation"/>
    <property type="evidence" value="ECO:0007669"/>
    <property type="project" value="UniProtKB-UniRule"/>
</dbReference>
<dbReference type="GO" id="GO:0006275">
    <property type="term" value="P:regulation of DNA replication"/>
    <property type="evidence" value="ECO:0007669"/>
    <property type="project" value="UniProtKB-UniRule"/>
</dbReference>
<dbReference type="CDD" id="cd00009">
    <property type="entry name" value="AAA"/>
    <property type="match status" value="1"/>
</dbReference>
<dbReference type="CDD" id="cd06571">
    <property type="entry name" value="Bac_DnaA_C"/>
    <property type="match status" value="1"/>
</dbReference>
<dbReference type="FunFam" id="1.10.1750.10:FF:000003">
    <property type="entry name" value="Chromosomal replication initiator protein DnaA"/>
    <property type="match status" value="1"/>
</dbReference>
<dbReference type="FunFam" id="1.10.8.60:FF:000003">
    <property type="entry name" value="Chromosomal replication initiator protein DnaA"/>
    <property type="match status" value="1"/>
</dbReference>
<dbReference type="FunFam" id="3.40.50.300:FF:000150">
    <property type="entry name" value="Chromosomal replication initiator protein DnaA"/>
    <property type="match status" value="1"/>
</dbReference>
<dbReference type="Gene3D" id="1.10.1750.10">
    <property type="match status" value="1"/>
</dbReference>
<dbReference type="Gene3D" id="1.10.8.60">
    <property type="match status" value="1"/>
</dbReference>
<dbReference type="Gene3D" id="3.30.300.180">
    <property type="match status" value="1"/>
</dbReference>
<dbReference type="Gene3D" id="3.40.50.300">
    <property type="entry name" value="P-loop containing nucleotide triphosphate hydrolases"/>
    <property type="match status" value="1"/>
</dbReference>
<dbReference type="HAMAP" id="MF_00377">
    <property type="entry name" value="DnaA_bact"/>
    <property type="match status" value="1"/>
</dbReference>
<dbReference type="InterPro" id="IPR003593">
    <property type="entry name" value="AAA+_ATPase"/>
</dbReference>
<dbReference type="InterPro" id="IPR001957">
    <property type="entry name" value="Chromosome_initiator_DnaA"/>
</dbReference>
<dbReference type="InterPro" id="IPR020591">
    <property type="entry name" value="Chromosome_initiator_DnaA-like"/>
</dbReference>
<dbReference type="InterPro" id="IPR018312">
    <property type="entry name" value="Chromosome_initiator_DnaA_CS"/>
</dbReference>
<dbReference type="InterPro" id="IPR013159">
    <property type="entry name" value="DnaA_C"/>
</dbReference>
<dbReference type="InterPro" id="IPR013317">
    <property type="entry name" value="DnaA_dom"/>
</dbReference>
<dbReference type="InterPro" id="IPR024633">
    <property type="entry name" value="DnaA_N_dom"/>
</dbReference>
<dbReference type="InterPro" id="IPR038454">
    <property type="entry name" value="DnaA_N_sf"/>
</dbReference>
<dbReference type="InterPro" id="IPR027417">
    <property type="entry name" value="P-loop_NTPase"/>
</dbReference>
<dbReference type="InterPro" id="IPR010921">
    <property type="entry name" value="Trp_repressor/repl_initiator"/>
</dbReference>
<dbReference type="NCBIfam" id="TIGR00362">
    <property type="entry name" value="DnaA"/>
    <property type="match status" value="1"/>
</dbReference>
<dbReference type="NCBIfam" id="NF010686">
    <property type="entry name" value="PRK14086.1"/>
    <property type="match status" value="1"/>
</dbReference>
<dbReference type="PANTHER" id="PTHR30050">
    <property type="entry name" value="CHROMOSOMAL REPLICATION INITIATOR PROTEIN DNAA"/>
    <property type="match status" value="1"/>
</dbReference>
<dbReference type="PANTHER" id="PTHR30050:SF2">
    <property type="entry name" value="CHROMOSOMAL REPLICATION INITIATOR PROTEIN DNAA"/>
    <property type="match status" value="1"/>
</dbReference>
<dbReference type="Pfam" id="PF00308">
    <property type="entry name" value="Bac_DnaA"/>
    <property type="match status" value="1"/>
</dbReference>
<dbReference type="Pfam" id="PF08299">
    <property type="entry name" value="Bac_DnaA_C"/>
    <property type="match status" value="1"/>
</dbReference>
<dbReference type="Pfam" id="PF11638">
    <property type="entry name" value="DnaA_N"/>
    <property type="match status" value="1"/>
</dbReference>
<dbReference type="PRINTS" id="PR00051">
    <property type="entry name" value="DNAA"/>
</dbReference>
<dbReference type="SMART" id="SM00382">
    <property type="entry name" value="AAA"/>
    <property type="match status" value="1"/>
</dbReference>
<dbReference type="SMART" id="SM00760">
    <property type="entry name" value="Bac_DnaA_C"/>
    <property type="match status" value="1"/>
</dbReference>
<dbReference type="SUPFAM" id="SSF52540">
    <property type="entry name" value="P-loop containing nucleoside triphosphate hydrolases"/>
    <property type="match status" value="1"/>
</dbReference>
<dbReference type="SUPFAM" id="SSF48295">
    <property type="entry name" value="TrpR-like"/>
    <property type="match status" value="1"/>
</dbReference>
<dbReference type="PROSITE" id="PS01008">
    <property type="entry name" value="DNAA"/>
    <property type="match status" value="1"/>
</dbReference>
<name>DNAA_CLOP1</name>
<accession>Q0TV64</accession>
<organism>
    <name type="scientific">Clostridium perfringens (strain ATCC 13124 / DSM 756 / JCM 1290 / NCIMB 6125 / NCTC 8237 / Type A)</name>
    <dbReference type="NCBI Taxonomy" id="195103"/>
    <lineage>
        <taxon>Bacteria</taxon>
        <taxon>Bacillati</taxon>
        <taxon>Bacillota</taxon>
        <taxon>Clostridia</taxon>
        <taxon>Eubacteriales</taxon>
        <taxon>Clostridiaceae</taxon>
        <taxon>Clostridium</taxon>
    </lineage>
</organism>